<accession>Q0PMD2</accession>
<comment type="function">
    <text evidence="2">Plays a role in cell attachment and migration. Interacts with extracellular matrix proteins and with the actin cytoskeleton and thereby plays an important role in normal extracellular matrix (ECM) homeostasis. Mediates adhesion of cells to type 1 collagen and gelatin, reorganization of the actin cytoskeleton and promotes cell spreading. Plays a role in the angiogenic response of cultured umbilical vein endothelial cells. May also act as a receptor for PLAU. Upon ligand binding, stimulates the phosphorylation of EGFR and ERK1/2.</text>
</comment>
<comment type="subunit">
    <text evidence="2">Interacts with gelatin and type 1 collagen. Interacts with the actin cytoskeleton.</text>
</comment>
<comment type="subcellular location">
    <subcellularLocation>
        <location evidence="2">Cell membrane</location>
        <topology evidence="2">Single-pass type I membrane protein</topology>
    </subcellularLocation>
    <subcellularLocation>
        <location evidence="2">Cell projection</location>
        <location evidence="2">Lamellipodium membrane</location>
        <topology evidence="2">Single-pass type I membrane protein</topology>
    </subcellularLocation>
    <subcellularLocation>
        <location evidence="2">Cell projection</location>
        <location evidence="2">Filopodium membrane</location>
        <topology evidence="2">Single-pass type I membrane protein</topology>
    </subcellularLocation>
    <text evidence="2">At the membrane of lamellipodia and at the tip of actin-enriched filopodia. Colocalizes with actin at the base of lamellipodia.</text>
</comment>
<comment type="PTM">
    <text evidence="2">Glycosylated.</text>
</comment>
<comment type="PTM">
    <text evidence="2">Phosphorylated upon PLAU binding.</text>
</comment>
<comment type="similarity">
    <text evidence="6">Belongs to the ATR family.</text>
</comment>
<comment type="sequence caution" evidence="6">
    <conflict type="erroneous initiation">
        <sequence resource="EMBL-CDS" id="AAI31854"/>
    </conflict>
</comment>
<comment type="sequence caution" evidence="6">
    <conflict type="erroneous initiation">
        <sequence resource="EMBL-CDS" id="ABH03702"/>
    </conflict>
</comment>
<protein>
    <recommendedName>
        <fullName>Anthrax toxin receptor 1</fullName>
    </recommendedName>
</protein>
<dbReference type="EMBL" id="DQ789143">
    <property type="protein sequence ID" value="ABH03702.1"/>
    <property type="status" value="ALT_INIT"/>
    <property type="molecule type" value="mRNA"/>
</dbReference>
<dbReference type="EMBL" id="BC131853">
    <property type="protein sequence ID" value="AAI31854.1"/>
    <property type="status" value="ALT_INIT"/>
    <property type="molecule type" value="mRNA"/>
</dbReference>
<dbReference type="RefSeq" id="NP_001037714.1">
    <property type="nucleotide sequence ID" value="NM_001044249.2"/>
</dbReference>
<dbReference type="PDB" id="8ZMN">
    <property type="method" value="X-ray"/>
    <property type="resolution" value="2.14 A"/>
    <property type="chains" value="A=35-218"/>
</dbReference>
<dbReference type="PDBsum" id="8ZMN"/>
<dbReference type="SMR" id="Q0PMD2"/>
<dbReference type="FunCoup" id="Q0PMD2">
    <property type="interactions" value="2040"/>
</dbReference>
<dbReference type="IntAct" id="Q0PMD2">
    <property type="interactions" value="1"/>
</dbReference>
<dbReference type="STRING" id="10116.ENSRNOP00000011675"/>
<dbReference type="GlyCosmos" id="Q0PMD2">
    <property type="glycosylation" value="3 sites, No reported glycans"/>
</dbReference>
<dbReference type="GlyGen" id="Q0PMD2">
    <property type="glycosylation" value="4 sites"/>
</dbReference>
<dbReference type="iPTMnet" id="Q0PMD2"/>
<dbReference type="PhosphoSitePlus" id="Q0PMD2"/>
<dbReference type="PaxDb" id="10116-ENSRNOP00000011675"/>
<dbReference type="GeneID" id="362393"/>
<dbReference type="KEGG" id="rno:362393"/>
<dbReference type="UCSC" id="RGD:1307144">
    <property type="organism name" value="rat"/>
</dbReference>
<dbReference type="AGR" id="RGD:1307144"/>
<dbReference type="CTD" id="84168"/>
<dbReference type="RGD" id="1307144">
    <property type="gene designation" value="Antxr1"/>
</dbReference>
<dbReference type="eggNOG" id="ENOG502QSKR">
    <property type="taxonomic scope" value="Eukaryota"/>
</dbReference>
<dbReference type="InParanoid" id="Q0PMD2"/>
<dbReference type="OrthoDB" id="10035766at2759"/>
<dbReference type="PhylomeDB" id="Q0PMD2"/>
<dbReference type="TreeFam" id="TF328943"/>
<dbReference type="PRO" id="PR:Q0PMD2"/>
<dbReference type="Proteomes" id="UP000002494">
    <property type="component" value="Unplaced"/>
</dbReference>
<dbReference type="GO" id="GO:0009986">
    <property type="term" value="C:cell surface"/>
    <property type="evidence" value="ECO:0000266"/>
    <property type="project" value="RGD"/>
</dbReference>
<dbReference type="GO" id="GO:0009897">
    <property type="term" value="C:external side of plasma membrane"/>
    <property type="evidence" value="ECO:0000266"/>
    <property type="project" value="RGD"/>
</dbReference>
<dbReference type="GO" id="GO:0031527">
    <property type="term" value="C:filopodium membrane"/>
    <property type="evidence" value="ECO:0000266"/>
    <property type="project" value="RGD"/>
</dbReference>
<dbReference type="GO" id="GO:0031258">
    <property type="term" value="C:lamellipodium membrane"/>
    <property type="evidence" value="ECO:0000266"/>
    <property type="project" value="RGD"/>
</dbReference>
<dbReference type="GO" id="GO:0005886">
    <property type="term" value="C:plasma membrane"/>
    <property type="evidence" value="ECO:0000318"/>
    <property type="project" value="GO_Central"/>
</dbReference>
<dbReference type="GO" id="GO:0051015">
    <property type="term" value="F:actin filament binding"/>
    <property type="evidence" value="ECO:0000266"/>
    <property type="project" value="RGD"/>
</dbReference>
<dbReference type="GO" id="GO:0005518">
    <property type="term" value="F:collagen binding"/>
    <property type="evidence" value="ECO:0000266"/>
    <property type="project" value="RGD"/>
</dbReference>
<dbReference type="GO" id="GO:0046872">
    <property type="term" value="F:metal ion binding"/>
    <property type="evidence" value="ECO:0007669"/>
    <property type="project" value="UniProtKB-KW"/>
</dbReference>
<dbReference type="GO" id="GO:0004888">
    <property type="term" value="F:transmembrane signaling receptor activity"/>
    <property type="evidence" value="ECO:0000266"/>
    <property type="project" value="RGD"/>
</dbReference>
<dbReference type="GO" id="GO:0030036">
    <property type="term" value="P:actin cytoskeleton organization"/>
    <property type="evidence" value="ECO:0000266"/>
    <property type="project" value="RGD"/>
</dbReference>
<dbReference type="GO" id="GO:0001568">
    <property type="term" value="P:blood vessel development"/>
    <property type="evidence" value="ECO:0000266"/>
    <property type="project" value="RGD"/>
</dbReference>
<dbReference type="GO" id="GO:1901202">
    <property type="term" value="P:negative regulation of extracellular matrix assembly"/>
    <property type="evidence" value="ECO:0000266"/>
    <property type="project" value="RGD"/>
</dbReference>
<dbReference type="GO" id="GO:0034446">
    <property type="term" value="P:substrate adhesion-dependent cell spreading"/>
    <property type="evidence" value="ECO:0000266"/>
    <property type="project" value="RGD"/>
</dbReference>
<dbReference type="CDD" id="cd01474">
    <property type="entry name" value="vWA_ATR"/>
    <property type="match status" value="1"/>
</dbReference>
<dbReference type="FunFam" id="3.40.50.410:FF:000017">
    <property type="entry name" value="Anthrax toxin receptor 1"/>
    <property type="match status" value="1"/>
</dbReference>
<dbReference type="Gene3D" id="3.40.50.410">
    <property type="entry name" value="von Willebrand factor, type A domain"/>
    <property type="match status" value="1"/>
</dbReference>
<dbReference type="InterPro" id="IPR017360">
    <property type="entry name" value="Anthrax_toxin_rcpt"/>
</dbReference>
<dbReference type="InterPro" id="IPR008399">
    <property type="entry name" value="Anthrax_toxin_rcpt_C"/>
</dbReference>
<dbReference type="InterPro" id="IPR008400">
    <property type="entry name" value="Anthrax_toxin_rcpt_extracel"/>
</dbReference>
<dbReference type="InterPro" id="IPR002035">
    <property type="entry name" value="VWF_A"/>
</dbReference>
<dbReference type="InterPro" id="IPR036465">
    <property type="entry name" value="vWFA_dom_sf"/>
</dbReference>
<dbReference type="PANTHER" id="PTHR16059">
    <property type="entry name" value="ANTHRAX TOXIN RECEPTOR"/>
    <property type="match status" value="1"/>
</dbReference>
<dbReference type="PANTHER" id="PTHR16059:SF11">
    <property type="entry name" value="ANTHRAX TOXIN RECEPTOR 1"/>
    <property type="match status" value="1"/>
</dbReference>
<dbReference type="Pfam" id="PF05586">
    <property type="entry name" value="Ant_C"/>
    <property type="match status" value="1"/>
</dbReference>
<dbReference type="Pfam" id="PF05587">
    <property type="entry name" value="Anth_Ig"/>
    <property type="match status" value="1"/>
</dbReference>
<dbReference type="Pfam" id="PF00092">
    <property type="entry name" value="VWA"/>
    <property type="match status" value="1"/>
</dbReference>
<dbReference type="PIRSF" id="PIRSF038023">
    <property type="entry name" value="Anthrax_toxin_receptor_2"/>
    <property type="match status" value="1"/>
</dbReference>
<dbReference type="PRINTS" id="PR01217">
    <property type="entry name" value="PRICHEXTENSN"/>
</dbReference>
<dbReference type="SMART" id="SM00327">
    <property type="entry name" value="VWA"/>
    <property type="match status" value="1"/>
</dbReference>
<dbReference type="SUPFAM" id="SSF53300">
    <property type="entry name" value="vWA-like"/>
    <property type="match status" value="1"/>
</dbReference>
<dbReference type="PROSITE" id="PS50234">
    <property type="entry name" value="VWFA"/>
    <property type="match status" value="1"/>
</dbReference>
<organism>
    <name type="scientific">Rattus norvegicus</name>
    <name type="common">Rat</name>
    <dbReference type="NCBI Taxonomy" id="10116"/>
    <lineage>
        <taxon>Eukaryota</taxon>
        <taxon>Metazoa</taxon>
        <taxon>Chordata</taxon>
        <taxon>Craniata</taxon>
        <taxon>Vertebrata</taxon>
        <taxon>Euteleostomi</taxon>
        <taxon>Mammalia</taxon>
        <taxon>Eutheria</taxon>
        <taxon>Euarchontoglires</taxon>
        <taxon>Glires</taxon>
        <taxon>Rodentia</taxon>
        <taxon>Myomorpha</taxon>
        <taxon>Muroidea</taxon>
        <taxon>Muridae</taxon>
        <taxon>Murinae</taxon>
        <taxon>Rattus</taxon>
    </lineage>
</organism>
<keyword id="KW-0002">3D-structure</keyword>
<keyword id="KW-1003">Cell membrane</keyword>
<keyword id="KW-0966">Cell projection</keyword>
<keyword id="KW-1015">Disulfide bond</keyword>
<keyword id="KW-0325">Glycoprotein</keyword>
<keyword id="KW-0472">Membrane</keyword>
<keyword id="KW-0479">Metal-binding</keyword>
<keyword id="KW-0597">Phosphoprotein</keyword>
<keyword id="KW-0675">Receptor</keyword>
<keyword id="KW-1185">Reference proteome</keyword>
<keyword id="KW-0732">Signal</keyword>
<keyword id="KW-0812">Transmembrane</keyword>
<keyword id="KW-1133">Transmembrane helix</keyword>
<feature type="signal peptide" evidence="3">
    <location>
        <begin position="1"/>
        <end position="25"/>
    </location>
</feature>
<feature type="chain" id="PRO_0000379880" description="Anthrax toxin receptor 1">
    <location>
        <begin position="26"/>
        <end position="562"/>
    </location>
</feature>
<feature type="topological domain" description="Extracellular" evidence="3">
    <location>
        <begin position="26"/>
        <end position="319"/>
    </location>
</feature>
<feature type="transmembrane region" description="Helical" evidence="3">
    <location>
        <begin position="320"/>
        <end position="340"/>
    </location>
</feature>
<feature type="topological domain" description="Cytoplasmic" evidence="3">
    <location>
        <begin position="341"/>
        <end position="562"/>
    </location>
</feature>
<feature type="domain" description="VWFA" evidence="4">
    <location>
        <begin position="42"/>
        <end position="213"/>
    </location>
</feature>
<feature type="region of interest" description="Disordered" evidence="5">
    <location>
        <begin position="400"/>
        <end position="442"/>
    </location>
</feature>
<feature type="region of interest" description="Disordered" evidence="5">
    <location>
        <begin position="490"/>
        <end position="562"/>
    </location>
</feature>
<feature type="compositionally biased region" description="Basic and acidic residues" evidence="5">
    <location>
        <begin position="400"/>
        <end position="420"/>
    </location>
</feature>
<feature type="compositionally biased region" description="Polar residues" evidence="5">
    <location>
        <begin position="490"/>
        <end position="500"/>
    </location>
</feature>
<feature type="compositionally biased region" description="Pro residues" evidence="5">
    <location>
        <begin position="503"/>
        <end position="562"/>
    </location>
</feature>
<feature type="binding site" evidence="1">
    <location>
        <position position="50"/>
    </location>
    <ligand>
        <name>a divalent metal cation</name>
        <dbReference type="ChEBI" id="CHEBI:60240"/>
    </ligand>
</feature>
<feature type="binding site" evidence="1">
    <location>
        <position position="52"/>
    </location>
    <ligand>
        <name>a divalent metal cation</name>
        <dbReference type="ChEBI" id="CHEBI:60240"/>
    </ligand>
</feature>
<feature type="binding site" evidence="1">
    <location>
        <position position="116"/>
    </location>
    <ligand>
        <name>a divalent metal cation</name>
        <dbReference type="ChEBI" id="CHEBI:60240"/>
    </ligand>
</feature>
<feature type="modified residue" description="Phosphoserine" evidence="7">
    <location>
        <position position="360"/>
    </location>
</feature>
<feature type="glycosylation site" description="N-linked (GlcNAc...) asparagine" evidence="3">
    <location>
        <position position="164"/>
    </location>
</feature>
<feature type="glycosylation site" description="N-linked (GlcNAc...) asparagine" evidence="3">
    <location>
        <position position="182"/>
    </location>
</feature>
<feature type="glycosylation site" description="N-linked (GlcNAc...) asparagine" evidence="3">
    <location>
        <position position="260"/>
    </location>
</feature>
<feature type="disulfide bond" evidence="1">
    <location>
        <begin position="37"/>
        <end position="218"/>
    </location>
</feature>
<feature type="strand" evidence="8">
    <location>
        <begin position="41"/>
        <end position="48"/>
    </location>
</feature>
<feature type="helix" evidence="8">
    <location>
        <begin position="51"/>
        <end position="56"/>
    </location>
</feature>
<feature type="helix" evidence="8">
    <location>
        <begin position="57"/>
        <end position="68"/>
    </location>
</feature>
<feature type="strand" evidence="8">
    <location>
        <begin position="76"/>
        <end position="94"/>
    </location>
</feature>
<feature type="helix" evidence="8">
    <location>
        <begin position="97"/>
        <end position="108"/>
    </location>
</feature>
<feature type="helix" evidence="8">
    <location>
        <begin position="118"/>
        <end position="134"/>
    </location>
</feature>
<feature type="strand" evidence="8">
    <location>
        <begin position="140"/>
        <end position="147"/>
    </location>
</feature>
<feature type="helix" evidence="8">
    <location>
        <begin position="153"/>
        <end position="168"/>
    </location>
</feature>
<feature type="strand" evidence="8">
    <location>
        <begin position="172"/>
        <end position="177"/>
    </location>
</feature>
<feature type="helix" evidence="8">
    <location>
        <begin position="183"/>
        <end position="189"/>
    </location>
</feature>
<feature type="strand" evidence="8">
    <location>
        <begin position="190"/>
        <end position="192"/>
    </location>
</feature>
<feature type="helix" evidence="8">
    <location>
        <begin position="193"/>
        <end position="195"/>
    </location>
</feature>
<feature type="strand" evidence="8">
    <location>
        <begin position="196"/>
        <end position="198"/>
    </location>
</feature>
<feature type="helix" evidence="8">
    <location>
        <begin position="199"/>
        <end position="201"/>
    </location>
</feature>
<feature type="helix" evidence="8">
    <location>
        <begin position="202"/>
        <end position="215"/>
    </location>
</feature>
<gene>
    <name type="primary">Antxr1</name>
</gene>
<proteinExistence type="evidence at protein level"/>
<reference key="1">
    <citation type="submission" date="2006-06" db="EMBL/GenBank/DDBJ databases">
        <title>Genetic susceptibility to anthrax lethal toxin in rats.</title>
        <authorList>
            <person name="Nye S.H."/>
            <person name="Evans D.L."/>
            <person name="Baye J."/>
        </authorList>
    </citation>
    <scope>NUCLEOTIDE SEQUENCE [MRNA]</scope>
    <source>
        <strain>Brown Norway/Mcwi</strain>
    </source>
</reference>
<reference key="2">
    <citation type="journal article" date="2004" name="Genome Res.">
        <title>The status, quality, and expansion of the NIH full-length cDNA project: the Mammalian Gene Collection (MGC).</title>
        <authorList>
            <consortium name="The MGC Project Team"/>
        </authorList>
    </citation>
    <scope>NUCLEOTIDE SEQUENCE [LARGE SCALE MRNA]</scope>
    <source>
        <tissue>Brain</tissue>
    </source>
</reference>
<reference key="3">
    <citation type="journal article" date="2012" name="Nat. Commun.">
        <title>Quantitative maps of protein phosphorylation sites across 14 different rat organs and tissues.</title>
        <authorList>
            <person name="Lundby A."/>
            <person name="Secher A."/>
            <person name="Lage K."/>
            <person name="Nordsborg N.B."/>
            <person name="Dmytriyev A."/>
            <person name="Lundby C."/>
            <person name="Olsen J.V."/>
        </authorList>
    </citation>
    <scope>PHOSPHORYLATION [LARGE SCALE ANALYSIS] AT SER-360</scope>
    <scope>IDENTIFICATION BY MASS SPECTROMETRY [LARGE SCALE ANALYSIS]</scope>
</reference>
<sequence>MDRAGRLGTGLRGLCVAALVLVCAGQGGRREDGGPACYGGFDLYFILDKSGSVLHHWNEIYYFVEQLAHRFISPQLRMSFIVFSTRGTTLMKLTEDREQIRQGLEELQKVLPGGDTYMHEGFERASEQIYYENSQGYRTASVIIALTDGELHEDLFFYSEREANRSRDLGAIVYCVGVKDFNETQLARIADSKDHVFPVNDGFQALQGIIHSILKKSCIEILAAEPSTICAGESFQVVVRGNGFRHARNVDRVLCSFKINDSVTLNEKPFAVEDTYLLCPAPILKEVGMKAALQVSMNDGLSFISSSVIITTTHCSDGSILAIALLILFLLLALALLWWFWPLCCTVIIKEVPPPPVEESEEEDDDGLPKKKWPTVDASYYGGRGVGGIKRMEVRWGEKGSTEEGAKLEKAKNARVKMPEQEYEFPEPRNLNNNMRRPSSPRKWYSPIKGKLDALWVLLRKGYDRVSVMRPQPGDTGRCINFTRVKNSQPAKYPLNNSYHSSSPPPAPIYTPPPPAPHCPPPAPSAPTPPIPSPPSTLPPPPQAPPPNRAPPPSRPPPRPSV</sequence>
<name>ANTR1_RAT</name>
<evidence type="ECO:0000250" key="1">
    <source>
        <dbReference type="UniProtKB" id="P58335"/>
    </source>
</evidence>
<evidence type="ECO:0000250" key="2">
    <source>
        <dbReference type="UniProtKB" id="Q9H6X2"/>
    </source>
</evidence>
<evidence type="ECO:0000255" key="3"/>
<evidence type="ECO:0000255" key="4">
    <source>
        <dbReference type="PROSITE-ProRule" id="PRU00219"/>
    </source>
</evidence>
<evidence type="ECO:0000256" key="5">
    <source>
        <dbReference type="SAM" id="MobiDB-lite"/>
    </source>
</evidence>
<evidence type="ECO:0000305" key="6"/>
<evidence type="ECO:0007744" key="7">
    <source>
    </source>
</evidence>
<evidence type="ECO:0007829" key="8">
    <source>
        <dbReference type="PDB" id="8ZMN"/>
    </source>
</evidence>